<accession>Q2FJB5</accession>
<protein>
    <recommendedName>
        <fullName>ATP-dependent Clp protease ATP-binding subunit ClpC</fullName>
    </recommendedName>
</protein>
<reference key="1">
    <citation type="journal article" date="2006" name="Lancet">
        <title>Complete genome sequence of USA300, an epidemic clone of community-acquired meticillin-resistant Staphylococcus aureus.</title>
        <authorList>
            <person name="Diep B.A."/>
            <person name="Gill S.R."/>
            <person name="Chang R.F."/>
            <person name="Phan T.H."/>
            <person name="Chen J.H."/>
            <person name="Davidson M.G."/>
            <person name="Lin F."/>
            <person name="Lin J."/>
            <person name="Carleton H.A."/>
            <person name="Mongodin E.F."/>
            <person name="Sensabaugh G.F."/>
            <person name="Perdreau-Remington F."/>
        </authorList>
    </citation>
    <scope>NUCLEOTIDE SEQUENCE [LARGE SCALE GENOMIC DNA]</scope>
    <source>
        <strain>USA300</strain>
    </source>
</reference>
<comment type="function">
    <text evidence="1">Required for growth at high temperatures, probably by acting as a chaperone during heat shock and targeting heat-denatured proteins for degradation by ClpP.</text>
</comment>
<comment type="similarity">
    <text evidence="5">Belongs to the ClpA/ClpB family. ClpC subfamily.</text>
</comment>
<feature type="chain" id="PRO_0000269680" description="ATP-dependent Clp protease ATP-binding subunit ClpC">
    <location>
        <begin position="1"/>
        <end position="818"/>
    </location>
</feature>
<feature type="domain" description="Clp R" evidence="4">
    <location>
        <begin position="3"/>
        <end position="144"/>
    </location>
</feature>
<feature type="domain" description="UVR" evidence="3">
    <location>
        <begin position="417"/>
        <end position="452"/>
    </location>
</feature>
<feature type="region of interest" description="Repeat 1" evidence="4">
    <location>
        <begin position="6"/>
        <end position="71"/>
    </location>
</feature>
<feature type="region of interest" description="Repeat 2" evidence="4">
    <location>
        <begin position="80"/>
        <end position="144"/>
    </location>
</feature>
<feature type="region of interest" description="I">
    <location>
        <begin position="163"/>
        <end position="410"/>
    </location>
</feature>
<feature type="region of interest" description="II">
    <location>
        <begin position="471"/>
        <end position="662"/>
    </location>
</feature>
<feature type="binding site" evidence="2">
    <location>
        <begin position="208"/>
        <end position="215"/>
    </location>
    <ligand>
        <name>ATP</name>
        <dbReference type="ChEBI" id="CHEBI:30616"/>
    </ligand>
</feature>
<feature type="binding site" evidence="2">
    <location>
        <begin position="545"/>
        <end position="552"/>
    </location>
    <ligand>
        <name>ATP</name>
        <dbReference type="ChEBI" id="CHEBI:30616"/>
    </ligand>
</feature>
<evidence type="ECO:0000250" key="1"/>
<evidence type="ECO:0000255" key="2"/>
<evidence type="ECO:0000255" key="3">
    <source>
        <dbReference type="PROSITE-ProRule" id="PRU00217"/>
    </source>
</evidence>
<evidence type="ECO:0000255" key="4">
    <source>
        <dbReference type="PROSITE-ProRule" id="PRU01251"/>
    </source>
</evidence>
<evidence type="ECO:0000305" key="5"/>
<organism>
    <name type="scientific">Staphylococcus aureus (strain USA300)</name>
    <dbReference type="NCBI Taxonomy" id="367830"/>
    <lineage>
        <taxon>Bacteria</taxon>
        <taxon>Bacillati</taxon>
        <taxon>Bacillota</taxon>
        <taxon>Bacilli</taxon>
        <taxon>Bacillales</taxon>
        <taxon>Staphylococcaceae</taxon>
        <taxon>Staphylococcus</taxon>
    </lineage>
</organism>
<gene>
    <name type="primary">clpC</name>
    <name type="ordered locus">SAUSA300_0510</name>
</gene>
<keyword id="KW-0067">ATP-binding</keyword>
<keyword id="KW-0143">Chaperone</keyword>
<keyword id="KW-0547">Nucleotide-binding</keyword>
<keyword id="KW-0677">Repeat</keyword>
<keyword id="KW-0346">Stress response</keyword>
<proteinExistence type="inferred from homology"/>
<dbReference type="EMBL" id="CP000255">
    <property type="protein sequence ID" value="ABD21512.1"/>
    <property type="molecule type" value="Genomic_DNA"/>
</dbReference>
<dbReference type="RefSeq" id="WP_000897132.1">
    <property type="nucleotide sequence ID" value="NZ_CP027476.1"/>
</dbReference>
<dbReference type="SMR" id="Q2FJB5"/>
<dbReference type="KEGG" id="saa:SAUSA300_0510"/>
<dbReference type="HOGENOM" id="CLU_005070_4_1_9"/>
<dbReference type="OMA" id="VSKMMQG"/>
<dbReference type="Proteomes" id="UP000001939">
    <property type="component" value="Chromosome"/>
</dbReference>
<dbReference type="GO" id="GO:0005737">
    <property type="term" value="C:cytoplasm"/>
    <property type="evidence" value="ECO:0007669"/>
    <property type="project" value="TreeGrafter"/>
</dbReference>
<dbReference type="GO" id="GO:0005524">
    <property type="term" value="F:ATP binding"/>
    <property type="evidence" value="ECO:0007669"/>
    <property type="project" value="UniProtKB-KW"/>
</dbReference>
<dbReference type="GO" id="GO:0016887">
    <property type="term" value="F:ATP hydrolysis activity"/>
    <property type="evidence" value="ECO:0007669"/>
    <property type="project" value="InterPro"/>
</dbReference>
<dbReference type="GO" id="GO:0034605">
    <property type="term" value="P:cellular response to heat"/>
    <property type="evidence" value="ECO:0007669"/>
    <property type="project" value="TreeGrafter"/>
</dbReference>
<dbReference type="CDD" id="cd00009">
    <property type="entry name" value="AAA"/>
    <property type="match status" value="1"/>
</dbReference>
<dbReference type="CDD" id="cd19499">
    <property type="entry name" value="RecA-like_ClpB_Hsp104-like"/>
    <property type="match status" value="1"/>
</dbReference>
<dbReference type="FunFam" id="1.10.8.60:FF:000017">
    <property type="entry name" value="ATP-dependent chaperone ClpB"/>
    <property type="match status" value="1"/>
</dbReference>
<dbReference type="FunFam" id="1.10.8.60:FF:000011">
    <property type="entry name" value="ATP-dependent Clp protease ATP-binding subunit"/>
    <property type="match status" value="1"/>
</dbReference>
<dbReference type="FunFam" id="3.40.50.300:FF:000025">
    <property type="entry name" value="ATP-dependent Clp protease subunit"/>
    <property type="match status" value="1"/>
</dbReference>
<dbReference type="FunFam" id="3.40.50.300:FF:000010">
    <property type="entry name" value="Chaperone clpB 1, putative"/>
    <property type="match status" value="1"/>
</dbReference>
<dbReference type="Gene3D" id="1.10.8.60">
    <property type="match status" value="2"/>
</dbReference>
<dbReference type="Gene3D" id="1.10.1780.10">
    <property type="entry name" value="Clp, N-terminal domain"/>
    <property type="match status" value="1"/>
</dbReference>
<dbReference type="Gene3D" id="3.40.50.300">
    <property type="entry name" value="P-loop containing nucleotide triphosphate hydrolases"/>
    <property type="match status" value="2"/>
</dbReference>
<dbReference type="Gene3D" id="4.10.860.10">
    <property type="entry name" value="UVR domain"/>
    <property type="match status" value="1"/>
</dbReference>
<dbReference type="InterPro" id="IPR003593">
    <property type="entry name" value="AAA+_ATPase"/>
</dbReference>
<dbReference type="InterPro" id="IPR003959">
    <property type="entry name" value="ATPase_AAA_core"/>
</dbReference>
<dbReference type="InterPro" id="IPR019489">
    <property type="entry name" value="Clp_ATPase_C"/>
</dbReference>
<dbReference type="InterPro" id="IPR036628">
    <property type="entry name" value="Clp_N_dom_sf"/>
</dbReference>
<dbReference type="InterPro" id="IPR004176">
    <property type="entry name" value="Clp_R_dom"/>
</dbReference>
<dbReference type="InterPro" id="IPR001270">
    <property type="entry name" value="ClpA/B"/>
</dbReference>
<dbReference type="InterPro" id="IPR018368">
    <property type="entry name" value="ClpA/B_CS1"/>
</dbReference>
<dbReference type="InterPro" id="IPR028299">
    <property type="entry name" value="ClpA/B_CS2"/>
</dbReference>
<dbReference type="InterPro" id="IPR041546">
    <property type="entry name" value="ClpA/ClpB_AAA_lid"/>
</dbReference>
<dbReference type="InterPro" id="IPR050130">
    <property type="entry name" value="ClpA_ClpB"/>
</dbReference>
<dbReference type="InterPro" id="IPR027417">
    <property type="entry name" value="P-loop_NTPase"/>
</dbReference>
<dbReference type="InterPro" id="IPR001943">
    <property type="entry name" value="UVR_dom"/>
</dbReference>
<dbReference type="PANTHER" id="PTHR11638">
    <property type="entry name" value="ATP-DEPENDENT CLP PROTEASE"/>
    <property type="match status" value="1"/>
</dbReference>
<dbReference type="PANTHER" id="PTHR11638:SF18">
    <property type="entry name" value="HEAT SHOCK PROTEIN 104"/>
    <property type="match status" value="1"/>
</dbReference>
<dbReference type="Pfam" id="PF00004">
    <property type="entry name" value="AAA"/>
    <property type="match status" value="1"/>
</dbReference>
<dbReference type="Pfam" id="PF07724">
    <property type="entry name" value="AAA_2"/>
    <property type="match status" value="1"/>
</dbReference>
<dbReference type="Pfam" id="PF17871">
    <property type="entry name" value="AAA_lid_9"/>
    <property type="match status" value="1"/>
</dbReference>
<dbReference type="Pfam" id="PF02861">
    <property type="entry name" value="Clp_N"/>
    <property type="match status" value="2"/>
</dbReference>
<dbReference type="Pfam" id="PF10431">
    <property type="entry name" value="ClpB_D2-small"/>
    <property type="match status" value="1"/>
</dbReference>
<dbReference type="PRINTS" id="PR00300">
    <property type="entry name" value="CLPPROTEASEA"/>
</dbReference>
<dbReference type="SMART" id="SM00382">
    <property type="entry name" value="AAA"/>
    <property type="match status" value="2"/>
</dbReference>
<dbReference type="SMART" id="SM01086">
    <property type="entry name" value="ClpB_D2-small"/>
    <property type="match status" value="1"/>
</dbReference>
<dbReference type="SUPFAM" id="SSF81923">
    <property type="entry name" value="Double Clp-N motif"/>
    <property type="match status" value="1"/>
</dbReference>
<dbReference type="SUPFAM" id="SSF52540">
    <property type="entry name" value="P-loop containing nucleoside triphosphate hydrolases"/>
    <property type="match status" value="2"/>
</dbReference>
<dbReference type="PROSITE" id="PS51903">
    <property type="entry name" value="CLP_R"/>
    <property type="match status" value="1"/>
</dbReference>
<dbReference type="PROSITE" id="PS00870">
    <property type="entry name" value="CLPAB_1"/>
    <property type="match status" value="1"/>
</dbReference>
<dbReference type="PROSITE" id="PS00871">
    <property type="entry name" value="CLPAB_2"/>
    <property type="match status" value="1"/>
</dbReference>
<dbReference type="PROSITE" id="PS50151">
    <property type="entry name" value="UVR"/>
    <property type="match status" value="1"/>
</dbReference>
<name>CLPC_STAA3</name>
<sequence>MLFGRLTERAQRVLAHAQEEAIRLNHSNIGTEHLLLGLMKEPEGIAAKVLESFNITEDKVIEEVEKLIGHGQDHVGTLHYTPRAKKVIELSMDEARKLHHNFVGTEHILLGLIRENEGVAARVFANLDLNITKARAQVVKALGNPEMSNKNAQASKSNNTPTLDSLARDLTVIAKDGTLDPVIGRDKEITRVIEVLSRRTKNNPVLIGEPGVGKTAIAEGLAQAIVNNEVPETLKDKRVMSLDMGTVVAGTKYRGEFEERLKKVMEEIQQAGNVILFIDELHTLVGAGGAEGAIDASNILKPALARGELQCIGATTLDEYRKNIEKDAALERRFQPVQVDEPSVVDTVAILKGLRDRYEAHHRINISDEAIEAAVKLSNRYVSDRFLPDKAIDLIDEASSKVRLKSHTTPNNLKEIEQEIEKVKNEKDAAVHAQEFENAANLRDKQTKLEKQYEEAKNEWKNAQNGMSTSLSEEDIAEVIAGWTGIPLTKINETESEKLLSLEDTLHERVIGQKDAVNSISKAVRRARAGLKDPKRPIGSFIFLGPTGVGKTELARALAESMFGDDDAMIRVDMSEFMEKHAVSRLVGAPPGYVGHDDGGQLTEKVRRKPYSVILFDEIEKAHPDVFNILLQVLDDGHLTDTKGRTVDFRNTIIIMTSNVGAQELQDQRFAGFGGSSDGQDYETIRKTMLKELKNSFRPEFLNRVDDIIVFHKLTKEELKEIVTMMVNKLTNRLSEQNINIIVTDKAKDKIAEEGYDPEYGARPLIRAIQKTIEDNLSELILDGNQIEGKKVTVDHDGKEFKYDIAEQTSETKTPSQA</sequence>